<evidence type="ECO:0000250" key="1"/>
<evidence type="ECO:0000255" key="2"/>
<evidence type="ECO:0000269" key="3">
    <source>
    </source>
</evidence>
<evidence type="ECO:0000269" key="4">
    <source>
    </source>
</evidence>
<evidence type="ECO:0000269" key="5">
    <source>
    </source>
</evidence>
<evidence type="ECO:0000269" key="6">
    <source>
    </source>
</evidence>
<evidence type="ECO:0000305" key="7"/>
<dbReference type="EMBL" id="AJ297352">
    <property type="protein sequence ID" value="CAB95845.1"/>
    <property type="molecule type" value="mRNA"/>
</dbReference>
<dbReference type="EMBL" id="AK029671">
    <property type="protein sequence ID" value="BAC26556.1"/>
    <property type="status" value="ALT_FRAME"/>
    <property type="molecule type" value="mRNA"/>
</dbReference>
<dbReference type="EMBL" id="AK041091">
    <property type="protein sequence ID" value="BAC30817.1"/>
    <property type="molecule type" value="mRNA"/>
</dbReference>
<dbReference type="EMBL" id="AK046515">
    <property type="protein sequence ID" value="BAC32764.1"/>
    <property type="molecule type" value="mRNA"/>
</dbReference>
<dbReference type="EMBL" id="AK054003">
    <property type="protein sequence ID" value="BAC35616.1"/>
    <property type="molecule type" value="mRNA"/>
</dbReference>
<dbReference type="EMBL" id="AK145263">
    <property type="protein sequence ID" value="BAE26331.1"/>
    <property type="molecule type" value="mRNA"/>
</dbReference>
<dbReference type="EMBL" id="AK157770">
    <property type="protein sequence ID" value="BAE34189.1"/>
    <property type="molecule type" value="mRNA"/>
</dbReference>
<dbReference type="EMBL" id="BC026840">
    <property type="protein sequence ID" value="AAH26840.1"/>
    <property type="molecule type" value="mRNA"/>
</dbReference>
<dbReference type="EMBL" id="BC098224">
    <property type="protein sequence ID" value="AAH98224.1"/>
    <property type="molecule type" value="mRNA"/>
</dbReference>
<dbReference type="CCDS" id="CCDS40818.1"/>
<dbReference type="RefSeq" id="NP_201579.1">
    <property type="nucleotide sequence ID" value="NM_033322.3"/>
</dbReference>
<dbReference type="SMR" id="Q9JHQ5"/>
<dbReference type="BioGRID" id="220275">
    <property type="interactions" value="8"/>
</dbReference>
<dbReference type="FunCoup" id="Q9JHQ5">
    <property type="interactions" value="1839"/>
</dbReference>
<dbReference type="IntAct" id="Q9JHQ5">
    <property type="interactions" value="3"/>
</dbReference>
<dbReference type="STRING" id="10090.ENSMUSP00000026274"/>
<dbReference type="iPTMnet" id="Q9JHQ5"/>
<dbReference type="PhosphoSitePlus" id="Q9JHQ5"/>
<dbReference type="SwissPalm" id="Q9JHQ5"/>
<dbReference type="REPRODUCTION-2DPAGE" id="IPI00458573"/>
<dbReference type="REPRODUCTION-2DPAGE" id="Q9JHQ5"/>
<dbReference type="jPOST" id="Q9JHQ5"/>
<dbReference type="PaxDb" id="10090-ENSMUSP00000026274"/>
<dbReference type="ProteomicsDB" id="291982"/>
<dbReference type="Pumba" id="Q9JHQ5"/>
<dbReference type="Antibodypedia" id="29604">
    <property type="antibodies" value="266 antibodies from 28 providers"/>
</dbReference>
<dbReference type="DNASU" id="93730"/>
<dbReference type="Ensembl" id="ENSMUST00000026274.14">
    <property type="protein sequence ID" value="ENSMUSP00000026274.8"/>
    <property type="gene ID" value="ENSMUSG00000025245.15"/>
</dbReference>
<dbReference type="GeneID" id="93730"/>
<dbReference type="KEGG" id="mmu:93730"/>
<dbReference type="UCSC" id="uc009sgm.1">
    <property type="organism name" value="mouse"/>
</dbReference>
<dbReference type="AGR" id="MGI:1934860"/>
<dbReference type="CTD" id="54585"/>
<dbReference type="MGI" id="MGI:1934860">
    <property type="gene designation" value="Lztfl1"/>
</dbReference>
<dbReference type="VEuPathDB" id="HostDB:ENSMUSG00000025245"/>
<dbReference type="eggNOG" id="ENOG502QRGB">
    <property type="taxonomic scope" value="Eukaryota"/>
</dbReference>
<dbReference type="GeneTree" id="ENSGT00390000016415"/>
<dbReference type="HOGENOM" id="CLU_083519_0_0_1"/>
<dbReference type="InParanoid" id="Q9JHQ5"/>
<dbReference type="OMA" id="QMEGTTA"/>
<dbReference type="OrthoDB" id="313412at2759"/>
<dbReference type="PhylomeDB" id="Q9JHQ5"/>
<dbReference type="TreeFam" id="TF329023"/>
<dbReference type="Reactome" id="R-MMU-5620922">
    <property type="pathway name" value="BBSome-mediated cargo-targeting to cilium"/>
</dbReference>
<dbReference type="BioGRID-ORCS" id="93730">
    <property type="hits" value="3 hits in 75 CRISPR screens"/>
</dbReference>
<dbReference type="ChiTaRS" id="Lztfl1">
    <property type="organism name" value="mouse"/>
</dbReference>
<dbReference type="PRO" id="PR:Q9JHQ5"/>
<dbReference type="Proteomes" id="UP000000589">
    <property type="component" value="Chromosome 9"/>
</dbReference>
<dbReference type="RNAct" id="Q9JHQ5">
    <property type="molecule type" value="protein"/>
</dbReference>
<dbReference type="Bgee" id="ENSMUSG00000025245">
    <property type="expression patterns" value="Expressed in spermatid and 255 other cell types or tissues"/>
</dbReference>
<dbReference type="ExpressionAtlas" id="Q9JHQ5">
    <property type="expression patterns" value="baseline and differential"/>
</dbReference>
<dbReference type="GO" id="GO:0005929">
    <property type="term" value="C:cilium"/>
    <property type="evidence" value="ECO:0000314"/>
    <property type="project" value="MGI"/>
</dbReference>
<dbReference type="GO" id="GO:0005737">
    <property type="term" value="C:cytoplasm"/>
    <property type="evidence" value="ECO:0000314"/>
    <property type="project" value="MGI"/>
</dbReference>
<dbReference type="GO" id="GO:0005829">
    <property type="term" value="C:cytosol"/>
    <property type="evidence" value="ECO:0007669"/>
    <property type="project" value="Ensembl"/>
</dbReference>
<dbReference type="GO" id="GO:0002177">
    <property type="term" value="C:manchette"/>
    <property type="evidence" value="ECO:0000314"/>
    <property type="project" value="MGI"/>
</dbReference>
<dbReference type="GO" id="GO:0042802">
    <property type="term" value="F:identical protein binding"/>
    <property type="evidence" value="ECO:0007669"/>
    <property type="project" value="Ensembl"/>
</dbReference>
<dbReference type="GO" id="GO:0044877">
    <property type="term" value="F:protein-containing complex binding"/>
    <property type="evidence" value="ECO:0000314"/>
    <property type="project" value="UniProtKB"/>
</dbReference>
<dbReference type="GO" id="GO:0030317">
    <property type="term" value="P:flagellated sperm motility"/>
    <property type="evidence" value="ECO:0000315"/>
    <property type="project" value="MGI"/>
</dbReference>
<dbReference type="GO" id="GO:1903568">
    <property type="term" value="P:negative regulation of protein localization to ciliary membrane"/>
    <property type="evidence" value="ECO:0007669"/>
    <property type="project" value="Ensembl"/>
</dbReference>
<dbReference type="GO" id="GO:0007283">
    <property type="term" value="P:spermatogenesis"/>
    <property type="evidence" value="ECO:0000315"/>
    <property type="project" value="MGI"/>
</dbReference>
<dbReference type="InterPro" id="IPR026157">
    <property type="entry name" value="LZTFL1"/>
</dbReference>
<dbReference type="PANTHER" id="PTHR21635">
    <property type="entry name" value="LEUCINE ZIPPER TRANSCRIPTION FACTOR LIKE"/>
    <property type="match status" value="1"/>
</dbReference>
<dbReference type="PANTHER" id="PTHR21635:SF0">
    <property type="entry name" value="LEUCINE ZIPPER TRANSCRIPTION FACTOR-LIKE PROTEIN 1"/>
    <property type="match status" value="1"/>
</dbReference>
<dbReference type="Pfam" id="PF15294">
    <property type="entry name" value="Leu_zip"/>
    <property type="match status" value="1"/>
</dbReference>
<reference key="1">
    <citation type="journal article" date="2001" name="Genomics">
        <title>The LZTFL1 gene is a part of a transcriptional map covering 250 kb within the common eliminated region 1 (C3CER1) in 3p21.3.</title>
        <authorList>
            <person name="Kiss H."/>
            <person name="Kedra D."/>
            <person name="Kiss C."/>
            <person name="Kost-Alimova M."/>
            <person name="Yang Y."/>
            <person name="Klein G."/>
            <person name="Imreh S."/>
            <person name="Dumanski J.P."/>
        </authorList>
    </citation>
    <scope>NUCLEOTIDE SEQUENCE [MRNA]</scope>
    <scope>TISSUE SPECIFICITY</scope>
</reference>
<reference key="2">
    <citation type="journal article" date="2005" name="Science">
        <title>The transcriptional landscape of the mammalian genome.</title>
        <authorList>
            <person name="Carninci P."/>
            <person name="Kasukawa T."/>
            <person name="Katayama S."/>
            <person name="Gough J."/>
            <person name="Frith M.C."/>
            <person name="Maeda N."/>
            <person name="Oyama R."/>
            <person name="Ravasi T."/>
            <person name="Lenhard B."/>
            <person name="Wells C."/>
            <person name="Kodzius R."/>
            <person name="Shimokawa K."/>
            <person name="Bajic V.B."/>
            <person name="Brenner S.E."/>
            <person name="Batalov S."/>
            <person name="Forrest A.R."/>
            <person name="Zavolan M."/>
            <person name="Davis M.J."/>
            <person name="Wilming L.G."/>
            <person name="Aidinis V."/>
            <person name="Allen J.E."/>
            <person name="Ambesi-Impiombato A."/>
            <person name="Apweiler R."/>
            <person name="Aturaliya R.N."/>
            <person name="Bailey T.L."/>
            <person name="Bansal M."/>
            <person name="Baxter L."/>
            <person name="Beisel K.W."/>
            <person name="Bersano T."/>
            <person name="Bono H."/>
            <person name="Chalk A.M."/>
            <person name="Chiu K.P."/>
            <person name="Choudhary V."/>
            <person name="Christoffels A."/>
            <person name="Clutterbuck D.R."/>
            <person name="Crowe M.L."/>
            <person name="Dalla E."/>
            <person name="Dalrymple B.P."/>
            <person name="de Bono B."/>
            <person name="Della Gatta G."/>
            <person name="di Bernardo D."/>
            <person name="Down T."/>
            <person name="Engstrom P."/>
            <person name="Fagiolini M."/>
            <person name="Faulkner G."/>
            <person name="Fletcher C.F."/>
            <person name="Fukushima T."/>
            <person name="Furuno M."/>
            <person name="Futaki S."/>
            <person name="Gariboldi M."/>
            <person name="Georgii-Hemming P."/>
            <person name="Gingeras T.R."/>
            <person name="Gojobori T."/>
            <person name="Green R.E."/>
            <person name="Gustincich S."/>
            <person name="Harbers M."/>
            <person name="Hayashi Y."/>
            <person name="Hensch T.K."/>
            <person name="Hirokawa N."/>
            <person name="Hill D."/>
            <person name="Huminiecki L."/>
            <person name="Iacono M."/>
            <person name="Ikeo K."/>
            <person name="Iwama A."/>
            <person name="Ishikawa T."/>
            <person name="Jakt M."/>
            <person name="Kanapin A."/>
            <person name="Katoh M."/>
            <person name="Kawasawa Y."/>
            <person name="Kelso J."/>
            <person name="Kitamura H."/>
            <person name="Kitano H."/>
            <person name="Kollias G."/>
            <person name="Krishnan S.P."/>
            <person name="Kruger A."/>
            <person name="Kummerfeld S.K."/>
            <person name="Kurochkin I.V."/>
            <person name="Lareau L.F."/>
            <person name="Lazarevic D."/>
            <person name="Lipovich L."/>
            <person name="Liu J."/>
            <person name="Liuni S."/>
            <person name="McWilliam S."/>
            <person name="Madan Babu M."/>
            <person name="Madera M."/>
            <person name="Marchionni L."/>
            <person name="Matsuda H."/>
            <person name="Matsuzawa S."/>
            <person name="Miki H."/>
            <person name="Mignone F."/>
            <person name="Miyake S."/>
            <person name="Morris K."/>
            <person name="Mottagui-Tabar S."/>
            <person name="Mulder N."/>
            <person name="Nakano N."/>
            <person name="Nakauchi H."/>
            <person name="Ng P."/>
            <person name="Nilsson R."/>
            <person name="Nishiguchi S."/>
            <person name="Nishikawa S."/>
            <person name="Nori F."/>
            <person name="Ohara O."/>
            <person name="Okazaki Y."/>
            <person name="Orlando V."/>
            <person name="Pang K.C."/>
            <person name="Pavan W.J."/>
            <person name="Pavesi G."/>
            <person name="Pesole G."/>
            <person name="Petrovsky N."/>
            <person name="Piazza S."/>
            <person name="Reed J."/>
            <person name="Reid J.F."/>
            <person name="Ring B.Z."/>
            <person name="Ringwald M."/>
            <person name="Rost B."/>
            <person name="Ruan Y."/>
            <person name="Salzberg S.L."/>
            <person name="Sandelin A."/>
            <person name="Schneider C."/>
            <person name="Schoenbach C."/>
            <person name="Sekiguchi K."/>
            <person name="Semple C.A."/>
            <person name="Seno S."/>
            <person name="Sessa L."/>
            <person name="Sheng Y."/>
            <person name="Shibata Y."/>
            <person name="Shimada H."/>
            <person name="Shimada K."/>
            <person name="Silva D."/>
            <person name="Sinclair B."/>
            <person name="Sperling S."/>
            <person name="Stupka E."/>
            <person name="Sugiura K."/>
            <person name="Sultana R."/>
            <person name="Takenaka Y."/>
            <person name="Taki K."/>
            <person name="Tammoja K."/>
            <person name="Tan S.L."/>
            <person name="Tang S."/>
            <person name="Taylor M.S."/>
            <person name="Tegner J."/>
            <person name="Teichmann S.A."/>
            <person name="Ueda H.R."/>
            <person name="van Nimwegen E."/>
            <person name="Verardo R."/>
            <person name="Wei C.L."/>
            <person name="Yagi K."/>
            <person name="Yamanishi H."/>
            <person name="Zabarovsky E."/>
            <person name="Zhu S."/>
            <person name="Zimmer A."/>
            <person name="Hide W."/>
            <person name="Bult C."/>
            <person name="Grimmond S.M."/>
            <person name="Teasdale R.D."/>
            <person name="Liu E.T."/>
            <person name="Brusic V."/>
            <person name="Quackenbush J."/>
            <person name="Wahlestedt C."/>
            <person name="Mattick J.S."/>
            <person name="Hume D.A."/>
            <person name="Kai C."/>
            <person name="Sasaki D."/>
            <person name="Tomaru Y."/>
            <person name="Fukuda S."/>
            <person name="Kanamori-Katayama M."/>
            <person name="Suzuki M."/>
            <person name="Aoki J."/>
            <person name="Arakawa T."/>
            <person name="Iida J."/>
            <person name="Imamura K."/>
            <person name="Itoh M."/>
            <person name="Kato T."/>
            <person name="Kawaji H."/>
            <person name="Kawagashira N."/>
            <person name="Kawashima T."/>
            <person name="Kojima M."/>
            <person name="Kondo S."/>
            <person name="Konno H."/>
            <person name="Nakano K."/>
            <person name="Ninomiya N."/>
            <person name="Nishio T."/>
            <person name="Okada M."/>
            <person name="Plessy C."/>
            <person name="Shibata K."/>
            <person name="Shiraki T."/>
            <person name="Suzuki S."/>
            <person name="Tagami M."/>
            <person name="Waki K."/>
            <person name="Watahiki A."/>
            <person name="Okamura-Oho Y."/>
            <person name="Suzuki H."/>
            <person name="Kawai J."/>
            <person name="Hayashizaki Y."/>
        </authorList>
    </citation>
    <scope>NUCLEOTIDE SEQUENCE [LARGE SCALE MRNA]</scope>
    <source>
        <strain>C57BL/6J</strain>
        <tissue>Adrenal gland</tissue>
        <tissue>Aorta</tissue>
        <tissue>Embryo</tissue>
        <tissue>Mammary gland</tissue>
        <tissue>Oviduct</tissue>
        <tissue>Testis</tissue>
    </source>
</reference>
<reference key="3">
    <citation type="journal article" date="2004" name="Genome Res.">
        <title>The status, quality, and expansion of the NIH full-length cDNA project: the Mammalian Gene Collection (MGC).</title>
        <authorList>
            <consortium name="The MGC Project Team"/>
        </authorList>
    </citation>
    <scope>NUCLEOTIDE SEQUENCE [LARGE SCALE MRNA]</scope>
    <source>
        <strain>C57BL/6J</strain>
        <strain>FVB/N</strain>
        <tissue>Salivary gland</tissue>
        <tissue>Thymus</tissue>
    </source>
</reference>
<reference key="4">
    <citation type="journal article" date="2010" name="Cancer Res.">
        <title>Tumor-suppressive functions of leucine zipper transcription factor-like 1.</title>
        <authorList>
            <person name="Wei Q."/>
            <person name="Zhou W."/>
            <person name="Wang W."/>
            <person name="Gao B."/>
            <person name="Wang L."/>
            <person name="Cao J."/>
            <person name="Liu Z.P."/>
        </authorList>
    </citation>
    <scope>FUNCTION AS TUMOR SUPPRESSOR</scope>
    <scope>TISSUE SPECIFICITY</scope>
</reference>
<reference key="5">
    <citation type="journal article" date="2010" name="Cell">
        <title>A tissue-specific atlas of mouse protein phosphorylation and expression.</title>
        <authorList>
            <person name="Huttlin E.L."/>
            <person name="Jedrychowski M.P."/>
            <person name="Elias J.E."/>
            <person name="Goswami T."/>
            <person name="Rad R."/>
            <person name="Beausoleil S.A."/>
            <person name="Villen J."/>
            <person name="Haas W."/>
            <person name="Sowa M.E."/>
            <person name="Gygi S.P."/>
        </authorList>
    </citation>
    <scope>IDENTIFICATION BY MASS SPECTROMETRY [LARGE SCALE ANALYSIS]</scope>
    <source>
        <tissue>Brain</tissue>
        <tissue>Brown adipose tissue</tissue>
        <tissue>Heart</tissue>
        <tissue>Kidney</tissue>
        <tissue>Liver</tissue>
        <tissue>Lung</tissue>
        <tissue>Pancreas</tissue>
        <tissue>Spleen</tissue>
        <tissue>Testis</tissue>
    </source>
</reference>
<reference key="6">
    <citation type="journal article" date="2011" name="PLoS Genet.">
        <title>A novel protein LZTFL1 regulates ciliary trafficking of the BBSome and Smoothened.</title>
        <authorList>
            <person name="Seo S."/>
            <person name="Zhang Q."/>
            <person name="Bugge K."/>
            <person name="Breslow D.K."/>
            <person name="Searby C.C."/>
            <person name="Nachury M.V."/>
            <person name="Sheffield V.C."/>
        </authorList>
    </citation>
    <scope>ASSOCIATION WITH THE BBSOME COMPLEX</scope>
    <scope>TISSUE SPECIFICITY</scope>
    <scope>SUBCELLULAR LOCATION</scope>
</reference>
<reference key="7">
    <citation type="journal article" date="2011" name="Biochem. Biophys. Res. Commun.">
        <title>Involvement of leucine zipper transcription factor-like protein 1 (Lztfl1) in the attenuation of cognitive impairment by exercise training.</title>
        <authorList>
            <person name="Sakurai T."/>
            <person name="Ogasawara J."/>
            <person name="Kizaki T."/>
            <person name="Ishibashi Y."/>
            <person name="Fujiwara T."/>
            <person name="Akagawa K."/>
            <person name="Izawa T."/>
            <person name="Oh-ishi S."/>
            <person name="Haga S."/>
            <person name="Ohno H."/>
        </authorList>
    </citation>
    <scope>FUNCTION IN NEURITE OUTGROWTH</scope>
    <scope>INDUCTION BY EXERCISE TRAINING</scope>
    <scope>TISSUE SPECIFICITY</scope>
    <scope>SUBCELLULAR LOCATION</scope>
</reference>
<name>LZTL1_MOUSE</name>
<accession>Q9JHQ5</accession>
<accession>Q8BRX8</accession>
<accession>Q8CDS2</accession>
<protein>
    <recommendedName>
        <fullName>Leucine zipper transcription factor-like protein 1</fullName>
    </recommendedName>
</protein>
<organism>
    <name type="scientific">Mus musculus</name>
    <name type="common">Mouse</name>
    <dbReference type="NCBI Taxonomy" id="10090"/>
    <lineage>
        <taxon>Eukaryota</taxon>
        <taxon>Metazoa</taxon>
        <taxon>Chordata</taxon>
        <taxon>Craniata</taxon>
        <taxon>Vertebrata</taxon>
        <taxon>Euteleostomi</taxon>
        <taxon>Mammalia</taxon>
        <taxon>Eutheria</taxon>
        <taxon>Euarchontoglires</taxon>
        <taxon>Glires</taxon>
        <taxon>Rodentia</taxon>
        <taxon>Myomorpha</taxon>
        <taxon>Muroidea</taxon>
        <taxon>Muridae</taxon>
        <taxon>Murinae</taxon>
        <taxon>Mus</taxon>
        <taxon>Mus</taxon>
    </lineage>
</organism>
<comment type="function">
    <text evidence="4 6">Regulates ciliary localization of the BBSome complex. Together with the BBSome complex, controls SMO ciliary trafficking and contributes to the sonic hedgehog (SHH) pathway regulation. May play a role in neurite outgrowth. May have tumor suppressor function.</text>
</comment>
<comment type="subunit">
    <text>Self-associates. Interacts with BBS9; the interaction mediates the association of LZTL1 with the BBsome complex and regulates BBSome ciliary trafficking.</text>
</comment>
<comment type="subcellular location">
    <subcellularLocation>
        <location evidence="5 6">Cytoplasm</location>
    </subcellularLocation>
</comment>
<comment type="tissue specificity">
    <text evidence="3 4 5 6">Highly expressed in testis. Expressed in brain, cerebellum, eye, heart, kidney, liver, lung and trachea. In small intestine, graded expression along the crypt-villus axis with high levels in the villus apex and lower levels in the crypt stem cells (at protein level). Not expressed in skeletal muscle and white adipose tissue.</text>
</comment>
<comment type="induction">
    <text evidence="6">In hippocampus, up-regulated by exercise training.</text>
</comment>
<comment type="similarity">
    <text evidence="7">Belongs to the LZTFL1 family.</text>
</comment>
<comment type="sequence caution" evidence="7">
    <conflict type="frameshift">
        <sequence resource="EMBL-CDS" id="BAC26556"/>
    </conflict>
</comment>
<keyword id="KW-0175">Coiled coil</keyword>
<keyword id="KW-0963">Cytoplasm</keyword>
<keyword id="KW-1185">Reference proteome</keyword>
<sequence length="299" mass="34773">MAELGLNEHHQNEVINYMRFARSKRGLRLKTVDSCFQDLKDSRLVEETFTIDEVSEVLNGLQAVVHSEVESELINTAYTNVLLLRQLFSQAEKWYLKLQTDISELENRELLEQVAEFEKAEFVSSSKKPIIDITKPKLVPINEGGTTELLNKEILRLQQENEKLKSRLKTIEIQAVNALDEKSKLERVLQDLQLDQENQQDLLKAQDLDDLENTVATLRSEFQKTLNDKTENQKSLEENLAAAKHDLLRVQEQLSMAEKELEKKFQQTAAYRNMKEILTKKNDQIKDLRKRLAKYESED</sequence>
<gene>
    <name type="primary">Lztfl1</name>
</gene>
<feature type="chain" id="PRO_0000318760" description="Leucine zipper transcription factor-like protein 1">
    <location>
        <begin position="1"/>
        <end position="299"/>
    </location>
</feature>
<feature type="region of interest" description="Interaction with BSS9" evidence="1">
    <location>
        <begin position="145"/>
        <end position="299"/>
    </location>
</feature>
<feature type="coiled-coil region" evidence="2">
    <location>
        <begin position="96"/>
        <end position="299"/>
    </location>
</feature>
<feature type="sequence conflict" description="In Ref. 2; BAC26556." evidence="7" ref="2">
    <original>K</original>
    <variation>E</variation>
    <location>
        <position position="280"/>
    </location>
</feature>
<feature type="sequence conflict" description="In Ref. 2; BAC30817." evidence="7" ref="2">
    <original>D</original>
    <variation>G</variation>
    <location>
        <position position="283"/>
    </location>
</feature>
<proteinExistence type="evidence at protein level"/>